<keyword id="KW-0378">Hydrolase</keyword>
<keyword id="KW-1185">Reference proteome</keyword>
<name>GLSA2_ECO57</name>
<dbReference type="EC" id="3.5.1.2" evidence="1"/>
<dbReference type="EMBL" id="AE005174">
    <property type="protein sequence ID" value="AAG56241.1"/>
    <property type="molecule type" value="Genomic_DNA"/>
</dbReference>
<dbReference type="EMBL" id="BA000007">
    <property type="protein sequence ID" value="BAB35554.1"/>
    <property type="molecule type" value="Genomic_DNA"/>
</dbReference>
<dbReference type="PIR" id="C90895">
    <property type="entry name" value="C90895"/>
</dbReference>
<dbReference type="PIR" id="E85722">
    <property type="entry name" value="E85722"/>
</dbReference>
<dbReference type="SMR" id="P0A6W2"/>
<dbReference type="STRING" id="155864.Z2179"/>
<dbReference type="KEGG" id="ece:Z2179"/>
<dbReference type="KEGG" id="ecs:ECs_2131"/>
<dbReference type="PATRIC" id="fig|386585.9.peg.2237"/>
<dbReference type="eggNOG" id="COG2066">
    <property type="taxonomic scope" value="Bacteria"/>
</dbReference>
<dbReference type="HOGENOM" id="CLU_027932_1_1_6"/>
<dbReference type="OMA" id="RPRNPFI"/>
<dbReference type="Proteomes" id="UP000000558">
    <property type="component" value="Chromosome"/>
</dbReference>
<dbReference type="Proteomes" id="UP000002519">
    <property type="component" value="Chromosome"/>
</dbReference>
<dbReference type="GO" id="GO:0004359">
    <property type="term" value="F:glutaminase activity"/>
    <property type="evidence" value="ECO:0007669"/>
    <property type="project" value="UniProtKB-UniRule"/>
</dbReference>
<dbReference type="GO" id="GO:0006537">
    <property type="term" value="P:glutamate biosynthetic process"/>
    <property type="evidence" value="ECO:0007669"/>
    <property type="project" value="TreeGrafter"/>
</dbReference>
<dbReference type="GO" id="GO:0006543">
    <property type="term" value="P:glutamine catabolic process"/>
    <property type="evidence" value="ECO:0007669"/>
    <property type="project" value="TreeGrafter"/>
</dbReference>
<dbReference type="FunFam" id="3.40.710.10:FF:000005">
    <property type="entry name" value="Glutaminase"/>
    <property type="match status" value="1"/>
</dbReference>
<dbReference type="Gene3D" id="3.40.710.10">
    <property type="entry name" value="DD-peptidase/beta-lactamase superfamily"/>
    <property type="match status" value="1"/>
</dbReference>
<dbReference type="HAMAP" id="MF_00313">
    <property type="entry name" value="Glutaminase"/>
    <property type="match status" value="1"/>
</dbReference>
<dbReference type="InterPro" id="IPR012338">
    <property type="entry name" value="Beta-lactam/transpept-like"/>
</dbReference>
<dbReference type="InterPro" id="IPR015868">
    <property type="entry name" value="Glutaminase"/>
</dbReference>
<dbReference type="NCBIfam" id="TIGR03814">
    <property type="entry name" value="Gln_ase"/>
    <property type="match status" value="1"/>
</dbReference>
<dbReference type="NCBIfam" id="NF002132">
    <property type="entry name" value="PRK00971.1-1"/>
    <property type="match status" value="1"/>
</dbReference>
<dbReference type="NCBIfam" id="NF002133">
    <property type="entry name" value="PRK00971.1-2"/>
    <property type="match status" value="1"/>
</dbReference>
<dbReference type="PANTHER" id="PTHR12544">
    <property type="entry name" value="GLUTAMINASE"/>
    <property type="match status" value="1"/>
</dbReference>
<dbReference type="PANTHER" id="PTHR12544:SF29">
    <property type="entry name" value="GLUTAMINASE"/>
    <property type="match status" value="1"/>
</dbReference>
<dbReference type="Pfam" id="PF04960">
    <property type="entry name" value="Glutaminase"/>
    <property type="match status" value="1"/>
</dbReference>
<dbReference type="SUPFAM" id="SSF56601">
    <property type="entry name" value="beta-lactamase/transpeptidase-like"/>
    <property type="match status" value="1"/>
</dbReference>
<gene>
    <name evidence="1" type="primary">glsA2</name>
    <name type="ordered locus">Z2179</name>
    <name type="ordered locus">ECs2131</name>
</gene>
<feature type="chain" id="PRO_0000110610" description="Glutaminase 2">
    <location>
        <begin position="1"/>
        <end position="308"/>
    </location>
</feature>
<feature type="binding site" evidence="1">
    <location>
        <position position="66"/>
    </location>
    <ligand>
        <name>substrate</name>
    </ligand>
</feature>
<feature type="binding site" evidence="1">
    <location>
        <position position="117"/>
    </location>
    <ligand>
        <name>substrate</name>
    </ligand>
</feature>
<feature type="binding site" evidence="1">
    <location>
        <position position="161"/>
    </location>
    <ligand>
        <name>substrate</name>
    </ligand>
</feature>
<feature type="binding site" evidence="1">
    <location>
        <position position="168"/>
    </location>
    <ligand>
        <name>substrate</name>
    </ligand>
</feature>
<feature type="binding site" evidence="1">
    <location>
        <position position="192"/>
    </location>
    <ligand>
        <name>substrate</name>
    </ligand>
</feature>
<feature type="binding site" evidence="1">
    <location>
        <position position="244"/>
    </location>
    <ligand>
        <name>substrate</name>
    </ligand>
</feature>
<feature type="binding site" evidence="1">
    <location>
        <position position="262"/>
    </location>
    <ligand>
        <name>substrate</name>
    </ligand>
</feature>
<evidence type="ECO:0000255" key="1">
    <source>
        <dbReference type="HAMAP-Rule" id="MF_00313"/>
    </source>
</evidence>
<reference key="1">
    <citation type="journal article" date="2001" name="Nature">
        <title>Genome sequence of enterohaemorrhagic Escherichia coli O157:H7.</title>
        <authorList>
            <person name="Perna N.T."/>
            <person name="Plunkett G. III"/>
            <person name="Burland V."/>
            <person name="Mau B."/>
            <person name="Glasner J.D."/>
            <person name="Rose D.J."/>
            <person name="Mayhew G.F."/>
            <person name="Evans P.S."/>
            <person name="Gregor J."/>
            <person name="Kirkpatrick H.A."/>
            <person name="Posfai G."/>
            <person name="Hackett J."/>
            <person name="Klink S."/>
            <person name="Boutin A."/>
            <person name="Shao Y."/>
            <person name="Miller L."/>
            <person name="Grotbeck E.J."/>
            <person name="Davis N.W."/>
            <person name="Lim A."/>
            <person name="Dimalanta E.T."/>
            <person name="Potamousis K."/>
            <person name="Apodaca J."/>
            <person name="Anantharaman T.S."/>
            <person name="Lin J."/>
            <person name="Yen G."/>
            <person name="Schwartz D.C."/>
            <person name="Welch R.A."/>
            <person name="Blattner F.R."/>
        </authorList>
    </citation>
    <scope>NUCLEOTIDE SEQUENCE [LARGE SCALE GENOMIC DNA]</scope>
    <source>
        <strain>O157:H7 / EDL933 / ATCC 700927 / EHEC</strain>
    </source>
</reference>
<reference key="2">
    <citation type="journal article" date="2001" name="DNA Res.">
        <title>Complete genome sequence of enterohemorrhagic Escherichia coli O157:H7 and genomic comparison with a laboratory strain K-12.</title>
        <authorList>
            <person name="Hayashi T."/>
            <person name="Makino K."/>
            <person name="Ohnishi M."/>
            <person name="Kurokawa K."/>
            <person name="Ishii K."/>
            <person name="Yokoyama K."/>
            <person name="Han C.-G."/>
            <person name="Ohtsubo E."/>
            <person name="Nakayama K."/>
            <person name="Murata T."/>
            <person name="Tanaka M."/>
            <person name="Tobe T."/>
            <person name="Iida T."/>
            <person name="Takami H."/>
            <person name="Honda T."/>
            <person name="Sasakawa C."/>
            <person name="Ogasawara N."/>
            <person name="Yasunaga T."/>
            <person name="Kuhara S."/>
            <person name="Shiba T."/>
            <person name="Hattori M."/>
            <person name="Shinagawa H."/>
        </authorList>
    </citation>
    <scope>NUCLEOTIDE SEQUENCE [LARGE SCALE GENOMIC DNA]</scope>
    <source>
        <strain>O157:H7 / Sakai / RIMD 0509952 / EHEC</strain>
    </source>
</reference>
<protein>
    <recommendedName>
        <fullName evidence="1">Glutaminase 2</fullName>
        <ecNumber evidence="1">3.5.1.2</ecNumber>
    </recommendedName>
</protein>
<organism>
    <name type="scientific">Escherichia coli O157:H7</name>
    <dbReference type="NCBI Taxonomy" id="83334"/>
    <lineage>
        <taxon>Bacteria</taxon>
        <taxon>Pseudomonadati</taxon>
        <taxon>Pseudomonadota</taxon>
        <taxon>Gammaproteobacteria</taxon>
        <taxon>Enterobacterales</taxon>
        <taxon>Enterobacteriaceae</taxon>
        <taxon>Escherichia</taxon>
    </lineage>
</organism>
<proteinExistence type="inferred from homology"/>
<sequence length="308" mass="33516">MAVAMDNAILENILRQVRPLIGQGKVADYIPALATVDGSRLGIAICTVDGQLFQAGDAQERFSIQSISKVLSLVVAMRHYSEEEIWQRVGKDPSGSPFNSLVQLEMEQGIPRNPFINAGALVVCDMLQGRLSAPRQRMLEVVRGLSGVSDISYDTVVARSEFEHSARNAAIAWLMKSFGNFHHDVTTVLQNYFHYCALKMSCVELARTFVFLANQGKAIHIDEPVVTPMQARQINALMATSGMYQNAGEFAWRVGLPAKSGVGGGIVAIVPHEMAIAVWSPELDDAGNSLAGIAVLEQLTKQLGRSVY</sequence>
<accession>P0A6W2</accession>
<accession>P77470</accession>
<comment type="catalytic activity">
    <reaction evidence="1">
        <text>L-glutamine + H2O = L-glutamate + NH4(+)</text>
        <dbReference type="Rhea" id="RHEA:15889"/>
        <dbReference type="ChEBI" id="CHEBI:15377"/>
        <dbReference type="ChEBI" id="CHEBI:28938"/>
        <dbReference type="ChEBI" id="CHEBI:29985"/>
        <dbReference type="ChEBI" id="CHEBI:58359"/>
        <dbReference type="EC" id="3.5.1.2"/>
    </reaction>
</comment>
<comment type="subunit">
    <text evidence="1">Homotetramer.</text>
</comment>
<comment type="similarity">
    <text evidence="1">Belongs to the glutaminase family.</text>
</comment>